<feature type="chain" id="PRO_0000363444" description="Pentatricopeptide repeat-containing protein At4g20090">
    <location>
        <begin position="1"/>
        <end position="660"/>
    </location>
</feature>
<feature type="repeat" description="PPR 1">
    <location>
        <begin position="76"/>
        <end position="110"/>
    </location>
</feature>
<feature type="repeat" description="PPR 2">
    <location>
        <begin position="111"/>
        <end position="141"/>
    </location>
</feature>
<feature type="repeat" description="PPR 3">
    <location>
        <begin position="147"/>
        <end position="181"/>
    </location>
</feature>
<feature type="repeat" description="PPR 4">
    <location>
        <begin position="186"/>
        <end position="220"/>
    </location>
</feature>
<feature type="repeat" description="PPR 5">
    <location>
        <begin position="221"/>
        <end position="255"/>
    </location>
</feature>
<feature type="repeat" description="PPR 6">
    <location>
        <begin position="256"/>
        <end position="290"/>
    </location>
</feature>
<feature type="repeat" description="PPR 7">
    <location>
        <begin position="291"/>
        <end position="325"/>
    </location>
</feature>
<feature type="repeat" description="PPR 8">
    <location>
        <begin position="326"/>
        <end position="360"/>
    </location>
</feature>
<feature type="repeat" description="PPR 9">
    <location>
        <begin position="361"/>
        <end position="395"/>
    </location>
</feature>
<feature type="repeat" description="PPR 10">
    <location>
        <begin position="396"/>
        <end position="430"/>
    </location>
</feature>
<feature type="repeat" description="PPR 11">
    <location>
        <begin position="431"/>
        <end position="465"/>
    </location>
</feature>
<feature type="repeat" description="PPR 12">
    <location>
        <begin position="466"/>
        <end position="500"/>
    </location>
</feature>
<feature type="repeat" description="PPR 13">
    <location>
        <begin position="501"/>
        <end position="535"/>
    </location>
</feature>
<feature type="repeat" description="PPR 14">
    <location>
        <begin position="539"/>
        <end position="573"/>
    </location>
</feature>
<feature type="repeat" description="PPR 15">
    <location>
        <begin position="574"/>
        <end position="609"/>
    </location>
</feature>
<gene>
    <name type="primary">EMB1025</name>
    <name type="ordered locus">At4g20090</name>
    <name type="ORF">F18F4.190</name>
</gene>
<comment type="function">
    <text evidence="1">May play a role in embryogenesis.</text>
</comment>
<comment type="similarity">
    <text evidence="2">Belongs to the PPR family. P subfamily.</text>
</comment>
<comment type="online information" name="Pentatricopeptide repeat proteins">
    <link uri="https://ppr.plantenergy.uwa.edu.au"/>
</comment>
<accession>O49436</accession>
<protein>
    <recommendedName>
        <fullName>Pentatricopeptide repeat-containing protein At4g20090</fullName>
    </recommendedName>
    <alternativeName>
        <fullName>Protein EMBRYO DEFECTIVE 1025</fullName>
    </alternativeName>
</protein>
<dbReference type="EMBL" id="AY864350">
    <property type="protein sequence ID" value="AAW62965.1"/>
    <property type="molecule type" value="Genomic_DNA"/>
</dbReference>
<dbReference type="EMBL" id="AL021637">
    <property type="protein sequence ID" value="CAA16617.1"/>
    <property type="molecule type" value="Genomic_DNA"/>
</dbReference>
<dbReference type="EMBL" id="AL161552">
    <property type="protein sequence ID" value="CAB79009.1"/>
    <property type="molecule type" value="Genomic_DNA"/>
</dbReference>
<dbReference type="EMBL" id="CP002687">
    <property type="protein sequence ID" value="AEE84271.1"/>
    <property type="molecule type" value="Genomic_DNA"/>
</dbReference>
<dbReference type="EMBL" id="CP002687">
    <property type="protein sequence ID" value="ANM67386.1"/>
    <property type="molecule type" value="Genomic_DNA"/>
</dbReference>
<dbReference type="PIR" id="H85227">
    <property type="entry name" value="H85227"/>
</dbReference>
<dbReference type="PIR" id="T04893">
    <property type="entry name" value="T04893"/>
</dbReference>
<dbReference type="RefSeq" id="NP_001320003.1">
    <property type="nucleotide sequence ID" value="NM_001341399.1"/>
</dbReference>
<dbReference type="RefSeq" id="NP_193742.1">
    <property type="nucleotide sequence ID" value="NM_118128.2"/>
</dbReference>
<dbReference type="SMR" id="O49436"/>
<dbReference type="FunCoup" id="O49436">
    <property type="interactions" value="414"/>
</dbReference>
<dbReference type="STRING" id="3702.O49436"/>
<dbReference type="iPTMnet" id="O49436"/>
<dbReference type="PaxDb" id="3702-AT4G20090.1"/>
<dbReference type="ProteomicsDB" id="249227"/>
<dbReference type="EnsemblPlants" id="AT4G20090.1">
    <property type="protein sequence ID" value="AT4G20090.1"/>
    <property type="gene ID" value="AT4G20090"/>
</dbReference>
<dbReference type="EnsemblPlants" id="AT4G20090.2">
    <property type="protein sequence ID" value="AT4G20090.2"/>
    <property type="gene ID" value="AT4G20090"/>
</dbReference>
<dbReference type="GeneID" id="827754"/>
<dbReference type="Gramene" id="AT4G20090.1">
    <property type="protein sequence ID" value="AT4G20090.1"/>
    <property type="gene ID" value="AT4G20090"/>
</dbReference>
<dbReference type="Gramene" id="AT4G20090.2">
    <property type="protein sequence ID" value="AT4G20090.2"/>
    <property type="gene ID" value="AT4G20090"/>
</dbReference>
<dbReference type="KEGG" id="ath:AT4G20090"/>
<dbReference type="Araport" id="AT4G20090"/>
<dbReference type="TAIR" id="AT4G20090">
    <property type="gene designation" value="EMB1025"/>
</dbReference>
<dbReference type="eggNOG" id="KOG4197">
    <property type="taxonomic scope" value="Eukaryota"/>
</dbReference>
<dbReference type="HOGENOM" id="CLU_002706_49_12_1"/>
<dbReference type="InParanoid" id="O49436"/>
<dbReference type="OMA" id="STWAMIV"/>
<dbReference type="PhylomeDB" id="O49436"/>
<dbReference type="PRO" id="PR:O49436"/>
<dbReference type="Proteomes" id="UP000006548">
    <property type="component" value="Chromosome 4"/>
</dbReference>
<dbReference type="ExpressionAtlas" id="O49436">
    <property type="expression patterns" value="baseline and differential"/>
</dbReference>
<dbReference type="GO" id="GO:0009793">
    <property type="term" value="P:embryo development ending in seed dormancy"/>
    <property type="evidence" value="ECO:0000315"/>
    <property type="project" value="TAIR"/>
</dbReference>
<dbReference type="FunFam" id="1.25.40.10:FF:000556">
    <property type="entry name" value="Pentatricopeptide repeat-containing protein, chloroplastic"/>
    <property type="match status" value="2"/>
</dbReference>
<dbReference type="Gene3D" id="1.25.40.10">
    <property type="entry name" value="Tetratricopeptide repeat domain"/>
    <property type="match status" value="6"/>
</dbReference>
<dbReference type="InterPro" id="IPR051240">
    <property type="entry name" value="Mito_RNA-Proc/Resp"/>
</dbReference>
<dbReference type="InterPro" id="IPR002885">
    <property type="entry name" value="Pentatricopeptide_rpt"/>
</dbReference>
<dbReference type="InterPro" id="IPR011990">
    <property type="entry name" value="TPR-like_helical_dom_sf"/>
</dbReference>
<dbReference type="NCBIfam" id="TIGR00756">
    <property type="entry name" value="PPR"/>
    <property type="match status" value="12"/>
</dbReference>
<dbReference type="PANTHER" id="PTHR47933">
    <property type="entry name" value="PENTATRICOPEPTIDE REPEAT-CONTAINING PROTEIN 1, MITOCHONDRIAL"/>
    <property type="match status" value="1"/>
</dbReference>
<dbReference type="PANTHER" id="PTHR47933:SF11">
    <property type="entry name" value="PENTATRICOPEPTIDE REPEAT-CONTAINING PROTEIN 2"/>
    <property type="match status" value="1"/>
</dbReference>
<dbReference type="Pfam" id="PF01535">
    <property type="entry name" value="PPR"/>
    <property type="match status" value="3"/>
</dbReference>
<dbReference type="Pfam" id="PF12854">
    <property type="entry name" value="PPR_1"/>
    <property type="match status" value="1"/>
</dbReference>
<dbReference type="Pfam" id="PF13041">
    <property type="entry name" value="PPR_2"/>
    <property type="match status" value="5"/>
</dbReference>
<dbReference type="SUPFAM" id="SSF81901">
    <property type="entry name" value="HCP-like"/>
    <property type="match status" value="1"/>
</dbReference>
<dbReference type="PROSITE" id="PS51375">
    <property type="entry name" value="PPR"/>
    <property type="match status" value="15"/>
</dbReference>
<reference key="1">
    <citation type="journal article" date="2005" name="Planta">
        <title>Arabidopsis emb175 and other ppr knockout mutants reveal essential roles for pentatricopeptide repeat (PPR) proteins in plant embryogenesis.</title>
        <authorList>
            <person name="Cushing D.A."/>
            <person name="Forsthoefel N.R."/>
            <person name="Gestaut D.R."/>
            <person name="Vernon D.M."/>
        </authorList>
    </citation>
    <scope>NUCLEOTIDE SEQUENCE [GENOMIC DNA]</scope>
    <scope>FUNCTION</scope>
</reference>
<reference key="2">
    <citation type="journal article" date="1999" name="Nature">
        <title>Sequence and analysis of chromosome 4 of the plant Arabidopsis thaliana.</title>
        <authorList>
            <person name="Mayer K.F.X."/>
            <person name="Schueller C."/>
            <person name="Wambutt R."/>
            <person name="Murphy G."/>
            <person name="Volckaert G."/>
            <person name="Pohl T."/>
            <person name="Duesterhoeft A."/>
            <person name="Stiekema W."/>
            <person name="Entian K.-D."/>
            <person name="Terryn N."/>
            <person name="Harris B."/>
            <person name="Ansorge W."/>
            <person name="Brandt P."/>
            <person name="Grivell L.A."/>
            <person name="Rieger M."/>
            <person name="Weichselgartner M."/>
            <person name="de Simone V."/>
            <person name="Obermaier B."/>
            <person name="Mache R."/>
            <person name="Mueller M."/>
            <person name="Kreis M."/>
            <person name="Delseny M."/>
            <person name="Puigdomenech P."/>
            <person name="Watson M."/>
            <person name="Schmidtheini T."/>
            <person name="Reichert B."/>
            <person name="Portetelle D."/>
            <person name="Perez-Alonso M."/>
            <person name="Boutry M."/>
            <person name="Bancroft I."/>
            <person name="Vos P."/>
            <person name="Hoheisel J."/>
            <person name="Zimmermann W."/>
            <person name="Wedler H."/>
            <person name="Ridley P."/>
            <person name="Langham S.-A."/>
            <person name="McCullagh B."/>
            <person name="Bilham L."/>
            <person name="Robben J."/>
            <person name="van der Schueren J."/>
            <person name="Grymonprez B."/>
            <person name="Chuang Y.-J."/>
            <person name="Vandenbussche F."/>
            <person name="Braeken M."/>
            <person name="Weltjens I."/>
            <person name="Voet M."/>
            <person name="Bastiaens I."/>
            <person name="Aert R."/>
            <person name="Defoor E."/>
            <person name="Weitzenegger T."/>
            <person name="Bothe G."/>
            <person name="Ramsperger U."/>
            <person name="Hilbert H."/>
            <person name="Braun M."/>
            <person name="Holzer E."/>
            <person name="Brandt A."/>
            <person name="Peters S."/>
            <person name="van Staveren M."/>
            <person name="Dirkse W."/>
            <person name="Mooijman P."/>
            <person name="Klein Lankhorst R."/>
            <person name="Rose M."/>
            <person name="Hauf J."/>
            <person name="Koetter P."/>
            <person name="Berneiser S."/>
            <person name="Hempel S."/>
            <person name="Feldpausch M."/>
            <person name="Lamberth S."/>
            <person name="Van den Daele H."/>
            <person name="De Keyser A."/>
            <person name="Buysshaert C."/>
            <person name="Gielen J."/>
            <person name="Villarroel R."/>
            <person name="De Clercq R."/>
            <person name="van Montagu M."/>
            <person name="Rogers J."/>
            <person name="Cronin A."/>
            <person name="Quail M.A."/>
            <person name="Bray-Allen S."/>
            <person name="Clark L."/>
            <person name="Doggett J."/>
            <person name="Hall S."/>
            <person name="Kay M."/>
            <person name="Lennard N."/>
            <person name="McLay K."/>
            <person name="Mayes R."/>
            <person name="Pettett A."/>
            <person name="Rajandream M.A."/>
            <person name="Lyne M."/>
            <person name="Benes V."/>
            <person name="Rechmann S."/>
            <person name="Borkova D."/>
            <person name="Bloecker H."/>
            <person name="Scharfe M."/>
            <person name="Grimm M."/>
            <person name="Loehnert T.-H."/>
            <person name="Dose S."/>
            <person name="de Haan M."/>
            <person name="Maarse A.C."/>
            <person name="Schaefer M."/>
            <person name="Mueller-Auer S."/>
            <person name="Gabel C."/>
            <person name="Fuchs M."/>
            <person name="Fartmann B."/>
            <person name="Granderath K."/>
            <person name="Dauner D."/>
            <person name="Herzl A."/>
            <person name="Neumann S."/>
            <person name="Argiriou A."/>
            <person name="Vitale D."/>
            <person name="Liguori R."/>
            <person name="Piravandi E."/>
            <person name="Massenet O."/>
            <person name="Quigley F."/>
            <person name="Clabauld G."/>
            <person name="Muendlein A."/>
            <person name="Felber R."/>
            <person name="Schnabl S."/>
            <person name="Hiller R."/>
            <person name="Schmidt W."/>
            <person name="Lecharny A."/>
            <person name="Aubourg S."/>
            <person name="Chefdor F."/>
            <person name="Cooke R."/>
            <person name="Berger C."/>
            <person name="Monfort A."/>
            <person name="Casacuberta E."/>
            <person name="Gibbons T."/>
            <person name="Weber N."/>
            <person name="Vandenbol M."/>
            <person name="Bargues M."/>
            <person name="Terol J."/>
            <person name="Torres A."/>
            <person name="Perez-Perez A."/>
            <person name="Purnelle B."/>
            <person name="Bent E."/>
            <person name="Johnson S."/>
            <person name="Tacon D."/>
            <person name="Jesse T."/>
            <person name="Heijnen L."/>
            <person name="Schwarz S."/>
            <person name="Scholler P."/>
            <person name="Heber S."/>
            <person name="Francs P."/>
            <person name="Bielke C."/>
            <person name="Frishman D."/>
            <person name="Haase D."/>
            <person name="Lemcke K."/>
            <person name="Mewes H.-W."/>
            <person name="Stocker S."/>
            <person name="Zaccaria P."/>
            <person name="Bevan M."/>
            <person name="Wilson R.K."/>
            <person name="de la Bastide M."/>
            <person name="Habermann K."/>
            <person name="Parnell L."/>
            <person name="Dedhia N."/>
            <person name="Gnoj L."/>
            <person name="Schutz K."/>
            <person name="Huang E."/>
            <person name="Spiegel L."/>
            <person name="Sekhon M."/>
            <person name="Murray J."/>
            <person name="Sheet P."/>
            <person name="Cordes M."/>
            <person name="Abu-Threideh J."/>
            <person name="Stoneking T."/>
            <person name="Kalicki J."/>
            <person name="Graves T."/>
            <person name="Harmon G."/>
            <person name="Edwards J."/>
            <person name="Latreille P."/>
            <person name="Courtney L."/>
            <person name="Cloud J."/>
            <person name="Abbott A."/>
            <person name="Scott K."/>
            <person name="Johnson D."/>
            <person name="Minx P."/>
            <person name="Bentley D."/>
            <person name="Fulton B."/>
            <person name="Miller N."/>
            <person name="Greco T."/>
            <person name="Kemp K."/>
            <person name="Kramer J."/>
            <person name="Fulton L."/>
            <person name="Mardis E."/>
            <person name="Dante M."/>
            <person name="Pepin K."/>
            <person name="Hillier L.W."/>
            <person name="Nelson J."/>
            <person name="Spieth J."/>
            <person name="Ryan E."/>
            <person name="Andrews S."/>
            <person name="Geisel C."/>
            <person name="Layman D."/>
            <person name="Du H."/>
            <person name="Ali J."/>
            <person name="Berghoff A."/>
            <person name="Jones K."/>
            <person name="Drone K."/>
            <person name="Cotton M."/>
            <person name="Joshu C."/>
            <person name="Antonoiu B."/>
            <person name="Zidanic M."/>
            <person name="Strong C."/>
            <person name="Sun H."/>
            <person name="Lamar B."/>
            <person name="Yordan C."/>
            <person name="Ma P."/>
            <person name="Zhong J."/>
            <person name="Preston R."/>
            <person name="Vil D."/>
            <person name="Shekher M."/>
            <person name="Matero A."/>
            <person name="Shah R."/>
            <person name="Swaby I.K."/>
            <person name="O'Shaughnessy A."/>
            <person name="Rodriguez M."/>
            <person name="Hoffman J."/>
            <person name="Till S."/>
            <person name="Granat S."/>
            <person name="Shohdy N."/>
            <person name="Hasegawa A."/>
            <person name="Hameed A."/>
            <person name="Lodhi M."/>
            <person name="Johnson A."/>
            <person name="Chen E."/>
            <person name="Marra M.A."/>
            <person name="Martienssen R."/>
            <person name="McCombie W.R."/>
        </authorList>
    </citation>
    <scope>NUCLEOTIDE SEQUENCE [LARGE SCALE GENOMIC DNA]</scope>
    <source>
        <strain>cv. Columbia</strain>
    </source>
</reference>
<reference key="3">
    <citation type="journal article" date="2017" name="Plant J.">
        <title>Araport11: a complete reannotation of the Arabidopsis thaliana reference genome.</title>
        <authorList>
            <person name="Cheng C.Y."/>
            <person name="Krishnakumar V."/>
            <person name="Chan A.P."/>
            <person name="Thibaud-Nissen F."/>
            <person name="Schobel S."/>
            <person name="Town C.D."/>
        </authorList>
    </citation>
    <scope>GENOME REANNOTATION</scope>
    <source>
        <strain>cv. Columbia</strain>
    </source>
</reference>
<reference key="4">
    <citation type="journal article" date="2004" name="Plant Cell">
        <title>Genome-wide analysis of Arabidopsis pentatricopeptide repeat proteins reveals their essential role in organelle biogenesis.</title>
        <authorList>
            <person name="Lurin C."/>
            <person name="Andres C."/>
            <person name="Aubourg S."/>
            <person name="Bellaoui M."/>
            <person name="Bitton F."/>
            <person name="Bruyere C."/>
            <person name="Caboche M."/>
            <person name="Debast C."/>
            <person name="Gualberto J."/>
            <person name="Hoffmann B."/>
            <person name="Lecharny A."/>
            <person name="Le Ret M."/>
            <person name="Martin-Magniette M.-L."/>
            <person name="Mireau H."/>
            <person name="Peeters N."/>
            <person name="Renou J.-P."/>
            <person name="Szurek B."/>
            <person name="Taconnat L."/>
            <person name="Small I."/>
        </authorList>
    </citation>
    <scope>GENE FAMILY</scope>
</reference>
<evidence type="ECO:0000269" key="1">
    <source>
    </source>
</evidence>
<evidence type="ECO:0000305" key="2"/>
<sequence>MPKCPIPIRISFFSYFLKESRILSSNPVNFSIHLRFSSSVSVSPNPSMEVVENPLEAPISEKMFKSAPKMGSFKLGDSTLSSMIESYANSGDFDSVEKLLSRIRLENRVIIERSFIVVFRAYGKAHLPDKAVDLFHRMVDEFRCKRSVKSFNSVLNVIINEGLYHRGLEFYDYVVNSNMNMNISPNGLSFNLVIKALCKLRFVDRAIEVFRGMPERKCLPDGYTYCTLMDGLCKEERIDEAVLLLDEMQSEGCSPSPVIYNVLIDGLCKKGDLTRVTKLVDNMFLKGCVPNEVTYNTLIHGLCLKGKLDKAVSLLERMVSSKCIPNDVTYGTLINGLVKQRRATDAVRLLSSMEERGYHLNQHIYSVLISGLFKEGKAEEAMSLWRKMAEKGCKPNIVVYSVLVDGLCREGKPNEAKEILNRMIASGCLPNAYTYSSLMKGFFKTGLCEEAVQVWKEMDKTGCSRNKFCYSVLIDGLCGVGRVKEAMMVWSKMLTIGIKPDTVAYSSIIKGLCGIGSMDAALKLYHEMLCQEEPKSQPDVVTYNILLDGLCMQKDISRAVDLLNSMLDRGCDPDVITCNTFLNTLSEKSNSCDKGRSFLEELVVRLLKRQRVSGACTIVEVMLGKYLAPKTSTWAMIVREICKPKKINAAIDKCWRNLCT</sequence>
<name>PP327_ARATH</name>
<keyword id="KW-1185">Reference proteome</keyword>
<keyword id="KW-0677">Repeat</keyword>
<proteinExistence type="inferred from homology"/>
<organism>
    <name type="scientific">Arabidopsis thaliana</name>
    <name type="common">Mouse-ear cress</name>
    <dbReference type="NCBI Taxonomy" id="3702"/>
    <lineage>
        <taxon>Eukaryota</taxon>
        <taxon>Viridiplantae</taxon>
        <taxon>Streptophyta</taxon>
        <taxon>Embryophyta</taxon>
        <taxon>Tracheophyta</taxon>
        <taxon>Spermatophyta</taxon>
        <taxon>Magnoliopsida</taxon>
        <taxon>eudicotyledons</taxon>
        <taxon>Gunneridae</taxon>
        <taxon>Pentapetalae</taxon>
        <taxon>rosids</taxon>
        <taxon>malvids</taxon>
        <taxon>Brassicales</taxon>
        <taxon>Brassicaceae</taxon>
        <taxon>Camelineae</taxon>
        <taxon>Arabidopsis</taxon>
    </lineage>
</organism>